<dbReference type="EMBL" id="DQ838630">
    <property type="protein sequence ID" value="ABG75808.1"/>
    <property type="molecule type" value="Genomic_RNA"/>
</dbReference>
<dbReference type="RefSeq" id="YP_002302224.1">
    <property type="nucleotide sequence ID" value="NC_011505.2"/>
</dbReference>
<dbReference type="iPTMnet" id="A2T3Q9"/>
<dbReference type="GeneID" id="7011364"/>
<dbReference type="KEGG" id="vg:7011364"/>
<dbReference type="Proteomes" id="UP000001119">
    <property type="component" value="Genome"/>
</dbReference>
<dbReference type="GO" id="GO:0030430">
    <property type="term" value="C:host cell cytoplasm"/>
    <property type="evidence" value="ECO:0007669"/>
    <property type="project" value="UniProtKB-SubCell"/>
</dbReference>
<dbReference type="GO" id="GO:0016887">
    <property type="term" value="F:ATP hydrolysis activity"/>
    <property type="evidence" value="ECO:0007669"/>
    <property type="project" value="UniProtKB-UniRule"/>
</dbReference>
<dbReference type="GO" id="GO:0000287">
    <property type="term" value="F:magnesium ion binding"/>
    <property type="evidence" value="ECO:0007669"/>
    <property type="project" value="UniProtKB-UniRule"/>
</dbReference>
<dbReference type="GO" id="GO:0000166">
    <property type="term" value="F:nucleotide binding"/>
    <property type="evidence" value="ECO:0007669"/>
    <property type="project" value="UniProtKB-UniRule"/>
</dbReference>
<dbReference type="GO" id="GO:0003723">
    <property type="term" value="F:RNA binding"/>
    <property type="evidence" value="ECO:0007669"/>
    <property type="project" value="UniProtKB-UniRule"/>
</dbReference>
<dbReference type="GO" id="GO:0019079">
    <property type="term" value="P:viral genome replication"/>
    <property type="evidence" value="ECO:0007669"/>
    <property type="project" value="UniProtKB-UniRule"/>
</dbReference>
<dbReference type="HAMAP" id="MF_04092">
    <property type="entry name" value="ROTA_NSP5"/>
    <property type="match status" value="1"/>
</dbReference>
<dbReference type="InterPro" id="IPR002512">
    <property type="entry name" value="Rotavirus_A/C_NSP5"/>
</dbReference>
<dbReference type="Pfam" id="PF01525">
    <property type="entry name" value="Rota_NS26"/>
    <property type="match status" value="2"/>
</dbReference>
<dbReference type="PIRSF" id="PIRSF004006">
    <property type="entry name" value="Rota_NS26"/>
    <property type="match status" value="1"/>
</dbReference>
<accession>A2T3Q9</accession>
<feature type="chain" id="PRO_0000367825" description="Non-structural protein 5">
    <location>
        <begin position="1"/>
        <end position="198"/>
    </location>
</feature>
<feature type="region of interest" description="Interaction with VP1" evidence="7">
    <location>
        <begin position="1"/>
        <end position="48"/>
    </location>
</feature>
<feature type="region of interest" description="Disordered" evidence="2">
    <location>
        <begin position="13"/>
        <end position="37"/>
    </location>
</feature>
<feature type="region of interest" description="Disordered" evidence="2">
    <location>
        <begin position="53"/>
        <end position="72"/>
    </location>
</feature>
<feature type="region of interest" description="Disordered" evidence="2">
    <location>
        <begin position="129"/>
        <end position="167"/>
    </location>
</feature>
<feature type="compositionally biased region" description="Acidic residues" evidence="2">
    <location>
        <begin position="153"/>
        <end position="166"/>
    </location>
</feature>
<feature type="binding site" evidence="1">
    <location>
        <position position="92"/>
    </location>
    <ligand>
        <name>Mg(2+)</name>
        <dbReference type="ChEBI" id="CHEBI:18420"/>
    </ligand>
</feature>
<feature type="modified residue" description="Phosphoserine; by host CK1" evidence="1 5">
    <location>
        <position position="67"/>
    </location>
</feature>
<feature type="modified residue" description="Phosphoserine; by host" evidence="1 11">
    <location>
        <position position="154"/>
    </location>
</feature>
<feature type="modified residue" description="Phosphoserine; by host" evidence="1 11">
    <location>
        <position position="156"/>
    </location>
</feature>
<feature type="modified residue" description="Phosphoserine; by host" evidence="1 11">
    <location>
        <position position="164"/>
    </location>
</feature>
<feature type="modified residue" description="Phosphoserine; by host" evidence="1 11">
    <location>
        <position position="166"/>
    </location>
</feature>
<feature type="mutagenesis site" description="Loss of hyperphosphorylation." evidence="5">
    <original>S</original>
    <variation>A</variation>
    <location>
        <position position="67"/>
    </location>
</feature>
<feature type="mutagenesis site" description="Constitutively hyperphosphorylated even in the absence of infection." evidence="5">
    <original>S</original>
    <variation>D</variation>
    <location>
        <position position="67"/>
    </location>
</feature>
<feature type="mutagenesis site" description="Loss of phosphorylation." evidence="3">
    <original>SDSDDYVLDDSDS</original>
    <variation>ADADDYVLDDADA</variation>
    <location>
        <begin position="154"/>
        <end position="166"/>
    </location>
</feature>
<organism>
    <name type="scientific">Rotavirus A (isolate RVA/Monkey/South Africa/SA11-H96/1958/G3P5B[2])</name>
    <name type="common">RV-A</name>
    <name type="synonym">Simian Agent 11 (isolate SI/South Africa/H96/58)</name>
    <dbReference type="NCBI Taxonomy" id="450149"/>
    <lineage>
        <taxon>Viruses</taxon>
        <taxon>Riboviria</taxon>
        <taxon>Orthornavirae</taxon>
        <taxon>Duplornaviricota</taxon>
        <taxon>Resentoviricetes</taxon>
        <taxon>Reovirales</taxon>
        <taxon>Sedoreoviridae</taxon>
        <taxon>Rotavirus</taxon>
        <taxon>Rotavirus A</taxon>
    </lineage>
</organism>
<name>NSP5_ROTSH</name>
<organismHost>
    <name type="scientific">Chlorocebus pygerythrus</name>
    <name type="common">Vervet monkey</name>
    <name type="synonym">Cercopithecus pygerythrus</name>
    <dbReference type="NCBI Taxonomy" id="60710"/>
</organismHost>
<protein>
    <recommendedName>
        <fullName evidence="1">Non-structural protein 5</fullName>
        <shortName evidence="1">NSP5</shortName>
    </recommendedName>
    <alternativeName>
        <fullName evidence="1">NS26</fullName>
    </alternativeName>
</protein>
<reference key="1">
    <citation type="journal article" date="2007" name="Virology">
        <title>Genome heterogeneity of SA11 rotavirus due to reassortment with 'O' agent.</title>
        <authorList>
            <person name="Small C."/>
            <person name="Barro M."/>
            <person name="Brown T.L."/>
            <person name="Patton J.T."/>
        </authorList>
    </citation>
    <scope>NUCLEOTIDE SEQUENCE [GENOMIC RNA]</scope>
</reference>
<reference key="2">
    <citation type="journal article" date="1996" name="J. Gen. Virol.">
        <title>Phosphorylation generates different forms of rotavirus NSP5.</title>
        <authorList>
            <person name="Afrikanova I."/>
            <person name="Miozzo M.C."/>
            <person name="Giambiagi S."/>
            <person name="Burrone O.R."/>
        </authorList>
    </citation>
    <scope>PHOSPHORYLATION</scope>
</reference>
<reference key="3">
    <citation type="journal article" date="2002" name="J. Virol.">
        <title>RNA-binding activity of the rotavirus phosphoprotein NSP5 includes affinity for double-stranded RNA.</title>
        <authorList>
            <person name="Vende P."/>
            <person name="Taraporewala Z.F."/>
            <person name="Patton J.T."/>
        </authorList>
    </citation>
    <scope>RNA-BINDING</scope>
</reference>
<reference key="4">
    <citation type="journal article" date="2002" name="J. Virol.">
        <title>Rotavirus NSP5: mapping phosphorylation sites and kinase activation and viroplasm localization domains.</title>
        <authorList>
            <person name="Eichwald C."/>
            <person name="Vascotto F."/>
            <person name="Fabbretti E."/>
            <person name="Burrone O.R."/>
        </authorList>
    </citation>
    <scope>FUNCTION</scope>
    <scope>SUBCELLULAR LOCATION</scope>
    <scope>PHOSPHORYLATION AT SER-154; SER-156; SER-164 AND SER-166</scope>
    <scope>MUTAGENESIS OF 154-SER--SER-166</scope>
</reference>
<reference key="5">
    <citation type="journal article" date="2004" name="Proc. Natl. Acad. Sci. U.S.A.">
        <title>Uncoupling substrate and activation functions of rotavirus NSP5: phosphorylation of Ser-67 by casein kinase 1 is essential for hyperphosphorylation.</title>
        <authorList>
            <person name="Eichwald C."/>
            <person name="Jacob G."/>
            <person name="Muszynski B."/>
            <person name="Allende J.E."/>
            <person name="Burrone O.R."/>
        </authorList>
    </citation>
    <scope>PHOSPHORYLATION AT SER-67 BY CK1</scope>
    <scope>MUTAGENESIS OF SER-67</scope>
</reference>
<reference key="6">
    <citation type="journal article" date="2004" name="J. Gen. Virol.">
        <title>Characterization of rotavirus NSP2/NSP5 interactions and the dynamics of viroplasm formation.</title>
        <authorList>
            <person name="Eichwald C."/>
            <person name="Rodriguez J.F."/>
            <person name="Burrone O.R."/>
        </authorList>
    </citation>
    <scope>SUBCELLULAR LOCATION</scope>
    <scope>INTERACTION WITH NSP2</scope>
</reference>
<reference key="7">
    <citation type="journal article" date="2007" name="J. Gen. Virol.">
        <title>Impaired hyperphosphorylation of rotavirus NSP5 in cells depleted of casein kinase 1alpha is associated with the formation of viroplasms with altered morphology and a moderate decrease in virus replication.</title>
        <authorList>
            <person name="Campagna M."/>
            <person name="Budini M."/>
            <person name="Arnoldi F."/>
            <person name="Desselberger U."/>
            <person name="Allende J.E."/>
            <person name="Burrone O.R."/>
        </authorList>
    </citation>
    <scope>ROLE OF PHOSPHORYLATION BY CK1</scope>
</reference>
<reference key="8">
    <citation type="journal article" date="2007" name="Virology">
        <title>An ATPase activity associated with the rotavirus phosphoprotein NSP5.</title>
        <authorList>
            <person name="Bar-Magen T."/>
            <person name="Spencer E."/>
            <person name="Patton J.T."/>
        </authorList>
    </citation>
    <scope>FUNCTION</scope>
</reference>
<reference key="9">
    <citation type="journal article" date="2007" name="J. Virol.">
        <title>Interaction of rotavirus polymerase VP1 with nonstructural protein NSP5 is stronger than that with NSP2.</title>
        <authorList>
            <person name="Arnoldi F."/>
            <person name="Campagna M."/>
            <person name="Eichwald C."/>
            <person name="Desselberger U."/>
            <person name="Burrone O.R."/>
        </authorList>
    </citation>
    <scope>INTERACTION WITH VP1</scope>
    <scope>SUBCELLULAR LOCATION</scope>
</reference>
<reference key="10">
    <citation type="journal article" date="2006" name="J. Virol.">
        <title>Cryoelectron microscopy structures of rotavirus NSP2-NSP5 and NSP2-RNA complexes: implications for genome replication.</title>
        <authorList>
            <person name="Jiang X."/>
            <person name="Jayaram H."/>
            <person name="Kumar M."/>
            <person name="Ludtke S.J."/>
            <person name="Estes M.K."/>
            <person name="Prasad B.V.V."/>
        </authorList>
    </citation>
    <scope>STRUCTURE BY ELECTRON MICROSCOPY (9.0 ANGSTROMS) IN COMPLEX WITH NSP2</scope>
    <scope>INTERACTION WITH NSP2</scope>
</reference>
<sequence>MSLSIDVTSLPSIPSTIYKNESSSTTSTLSGKSIGRSEQYISPDAEAFNKYMLSKSPEDIGPSDSASNDPLTSFSIRSNAVKTNADAGVSMDSSAQSRPSSNVGCDQVDFSLNKGLKVKANLDSSISISTDTKKEKSKQNHKSRKHYPRIEAESDSDDYVLDDSDSDDGKCKNCKYKKKYFALRMRMKQVAMQLIEDL</sequence>
<keyword id="KW-0325">Glycoprotein</keyword>
<keyword id="KW-1035">Host cytoplasm</keyword>
<keyword id="KW-0945">Host-virus interaction</keyword>
<keyword id="KW-0460">Magnesium</keyword>
<keyword id="KW-0479">Metal-binding</keyword>
<keyword id="KW-0547">Nucleotide-binding</keyword>
<keyword id="KW-0597">Phosphoprotein</keyword>
<keyword id="KW-1185">Reference proteome</keyword>
<keyword id="KW-0694">RNA-binding</keyword>
<proteinExistence type="evidence at protein level"/>
<comment type="function">
    <text evidence="1 3 8">Plays an essential role in the viral genome replication. Participates, together with NSP2, in the formation of viral factories (viroplasms), which are large inclusions in the host cytoplasm where replication intermediates are assembled and viral RNA replication takes place. Orchestrates the recruitment of viroplasmic proteins such as capsid proteins to these factories (PubMed:11884570, PubMed:17825341). Participates in the selective exclusion of host proteins from stress granules (SG) and P bodies (PB). Also participates in the sequestration of these remodeled organelles in viral factories (By similarity).</text>
</comment>
<comment type="cofactor">
    <cofactor evidence="1">
        <name>Mg(2+)</name>
        <dbReference type="ChEBI" id="CHEBI:18420"/>
    </cofactor>
</comment>
<comment type="subunit">
    <text evidence="1 4 6 7">Homodimer. Interacts with VP1 (PubMed:17182692). Interacts with VP2. Interacts with NSP2; this interaction leads to up-regulation of NSP5 hyperphosphorylation and formation of virus factories (PubMed:14993647, PubMed:16928740). Interacts with NSP6. Interacts with host DCP1A, DCP1B, DDX6, EDC4, EIF2S1/eIF2-alpha, AGO2 and CAPRIN1; these interactions are probably part of the sequestration of some host SGs and PBs proteins in viral factories (By similarity).</text>
</comment>
<comment type="subcellular location">
    <subcellularLocation>
        <location evidence="1 3 4 7">Host cytoplasm</location>
    </subcellularLocation>
    <text evidence="1">Found in spherical cytoplasmic structures, called virus factories, that appear early after infection and are the site of viral replication and packaging.</text>
</comment>
<comment type="PTM">
    <text evidence="1">O-glycosylated.</text>
</comment>
<comment type="PTM">
    <text evidence="1 3 5 9 10">Hyperphosphorylated on serine residues, when in dimeric form. Phosphorylation by host CK1 is required for the hyperphosphorylation of NSP5 dimer.</text>
</comment>
<comment type="similarity">
    <text evidence="1">Belongs to the rotavirus NSP5 family.</text>
</comment>
<evidence type="ECO:0000255" key="1">
    <source>
        <dbReference type="HAMAP-Rule" id="MF_04092"/>
    </source>
</evidence>
<evidence type="ECO:0000256" key="2">
    <source>
        <dbReference type="SAM" id="MobiDB-lite"/>
    </source>
</evidence>
<evidence type="ECO:0000269" key="3">
    <source>
    </source>
</evidence>
<evidence type="ECO:0000269" key="4">
    <source>
    </source>
</evidence>
<evidence type="ECO:0000269" key="5">
    <source>
    </source>
</evidence>
<evidence type="ECO:0000269" key="6">
    <source>
    </source>
</evidence>
<evidence type="ECO:0000269" key="7">
    <source>
    </source>
</evidence>
<evidence type="ECO:0000269" key="8">
    <source>
    </source>
</evidence>
<evidence type="ECO:0000269" key="9">
    <source>
    </source>
</evidence>
<evidence type="ECO:0000269" key="10">
    <source>
    </source>
</evidence>
<evidence type="ECO:0000305" key="11">
    <source>
    </source>
</evidence>